<dbReference type="EMBL" id="EF067920">
    <property type="protein sequence ID" value="ABK20675.1"/>
    <property type="molecule type" value="Genomic_DNA"/>
</dbReference>
<dbReference type="RefSeq" id="YP_874452.1">
    <property type="nucleotide sequence ID" value="NC_008588.1"/>
</dbReference>
<dbReference type="SMR" id="A0T0H7"/>
<dbReference type="STRING" id="556484.A0T0H7"/>
<dbReference type="GeneID" id="4524555"/>
<dbReference type="InParanoid" id="A0T0H7"/>
<dbReference type="Proteomes" id="UP000000759">
    <property type="component" value="Chloroplast"/>
</dbReference>
<dbReference type="GO" id="GO:0009507">
    <property type="term" value="C:chloroplast"/>
    <property type="evidence" value="ECO:0007669"/>
    <property type="project" value="UniProtKB-SubCell"/>
</dbReference>
<dbReference type="GO" id="GO:0005524">
    <property type="term" value="F:ATP binding"/>
    <property type="evidence" value="ECO:0007669"/>
    <property type="project" value="UniProtKB-UniRule"/>
</dbReference>
<dbReference type="GO" id="GO:0140662">
    <property type="term" value="F:ATP-dependent protein folding chaperone"/>
    <property type="evidence" value="ECO:0007669"/>
    <property type="project" value="InterPro"/>
</dbReference>
<dbReference type="GO" id="GO:0051082">
    <property type="term" value="F:unfolded protein binding"/>
    <property type="evidence" value="ECO:0007669"/>
    <property type="project" value="InterPro"/>
</dbReference>
<dbReference type="CDD" id="cd10234">
    <property type="entry name" value="ASKHA_NBD_HSP70_DnaK-like"/>
    <property type="match status" value="1"/>
</dbReference>
<dbReference type="FunFam" id="2.60.34.10:FF:000014">
    <property type="entry name" value="Chaperone protein DnaK HSP70"/>
    <property type="match status" value="1"/>
</dbReference>
<dbReference type="FunFam" id="3.30.420.40:FF:000004">
    <property type="entry name" value="Molecular chaperone DnaK"/>
    <property type="match status" value="1"/>
</dbReference>
<dbReference type="FunFam" id="3.90.640.10:FF:000003">
    <property type="entry name" value="Molecular chaperone DnaK"/>
    <property type="match status" value="1"/>
</dbReference>
<dbReference type="Gene3D" id="1.20.1270.10">
    <property type="match status" value="1"/>
</dbReference>
<dbReference type="Gene3D" id="3.30.420.40">
    <property type="match status" value="2"/>
</dbReference>
<dbReference type="Gene3D" id="3.90.640.10">
    <property type="entry name" value="Actin, Chain A, domain 4"/>
    <property type="match status" value="1"/>
</dbReference>
<dbReference type="Gene3D" id="2.60.34.10">
    <property type="entry name" value="Substrate Binding Domain Of DNAk, Chain A, domain 1"/>
    <property type="match status" value="1"/>
</dbReference>
<dbReference type="HAMAP" id="MF_00332">
    <property type="entry name" value="DnaK"/>
    <property type="match status" value="1"/>
</dbReference>
<dbReference type="InterPro" id="IPR043129">
    <property type="entry name" value="ATPase_NBD"/>
</dbReference>
<dbReference type="InterPro" id="IPR012725">
    <property type="entry name" value="Chaperone_DnaK"/>
</dbReference>
<dbReference type="InterPro" id="IPR018181">
    <property type="entry name" value="Heat_shock_70_CS"/>
</dbReference>
<dbReference type="InterPro" id="IPR029048">
    <property type="entry name" value="HSP70_C_sf"/>
</dbReference>
<dbReference type="InterPro" id="IPR029047">
    <property type="entry name" value="HSP70_peptide-bd_sf"/>
</dbReference>
<dbReference type="InterPro" id="IPR013126">
    <property type="entry name" value="Hsp_70_fam"/>
</dbReference>
<dbReference type="NCBIfam" id="NF001413">
    <property type="entry name" value="PRK00290.1"/>
    <property type="match status" value="1"/>
</dbReference>
<dbReference type="NCBIfam" id="NF003520">
    <property type="entry name" value="PRK05183.1"/>
    <property type="match status" value="1"/>
</dbReference>
<dbReference type="NCBIfam" id="TIGR02350">
    <property type="entry name" value="prok_dnaK"/>
    <property type="match status" value="1"/>
</dbReference>
<dbReference type="PANTHER" id="PTHR19375">
    <property type="entry name" value="HEAT SHOCK PROTEIN 70KDA"/>
    <property type="match status" value="1"/>
</dbReference>
<dbReference type="Pfam" id="PF00012">
    <property type="entry name" value="HSP70"/>
    <property type="match status" value="1"/>
</dbReference>
<dbReference type="PRINTS" id="PR00301">
    <property type="entry name" value="HEATSHOCK70"/>
</dbReference>
<dbReference type="SUPFAM" id="SSF53067">
    <property type="entry name" value="Actin-like ATPase domain"/>
    <property type="match status" value="2"/>
</dbReference>
<dbReference type="SUPFAM" id="SSF100920">
    <property type="entry name" value="Heat shock protein 70kD (HSP70), peptide-binding domain"/>
    <property type="match status" value="1"/>
</dbReference>
<dbReference type="PROSITE" id="PS00297">
    <property type="entry name" value="HSP70_1"/>
    <property type="match status" value="1"/>
</dbReference>
<dbReference type="PROSITE" id="PS00329">
    <property type="entry name" value="HSP70_2"/>
    <property type="match status" value="1"/>
</dbReference>
<feature type="chain" id="PRO_0000275349" description="Chaperone protein dnaK">
    <location>
        <begin position="1"/>
        <end position="613"/>
    </location>
</feature>
<gene>
    <name evidence="1" type="primary">dnaK</name>
</gene>
<comment type="function">
    <text evidence="1">Acts as a chaperone.</text>
</comment>
<comment type="subcellular location">
    <subcellularLocation>
        <location>Plastid</location>
        <location>Chloroplast</location>
    </subcellularLocation>
</comment>
<comment type="similarity">
    <text evidence="1">Belongs to the heat shock protein 70 family.</text>
</comment>
<geneLocation type="chloroplast"/>
<protein>
    <recommendedName>
        <fullName>Chaperone protein dnaK</fullName>
    </recommendedName>
    <alternativeName>
        <fullName evidence="1">HSP70</fullName>
    </alternativeName>
    <alternativeName>
        <fullName evidence="1">Heat shock 70 kDa protein</fullName>
    </alternativeName>
    <alternativeName>
        <fullName evidence="1">Heat shock protein 70</fullName>
    </alternativeName>
</protein>
<keyword id="KW-0067">ATP-binding</keyword>
<keyword id="KW-0143">Chaperone</keyword>
<keyword id="KW-0150">Chloroplast</keyword>
<keyword id="KW-0547">Nucleotide-binding</keyword>
<keyword id="KW-0934">Plastid</keyword>
<keyword id="KW-1185">Reference proteome</keyword>
<sequence length="613" mass="66724">MGKVVGIDLGTTNSVVAAIEGGQPSVIINAEGLRTTPSIVAYTKKEELLVGQIAKRQAVINPENTFFSVKRFIGSKEGEISKEAKKLPYKVSNDQNNNIKIKCPALNRDFSPEEISAQVLRKLINDATDYLGQEVTQAVITVPAYFNDSQRQATMDAGKIAGVEVLRIINEPTAASLAYGLDKKQNETILVFDLGGGTFDVSILEVGDGIFEVLSTAGDTNLGGDDFDNVLVNWLINDFKEKNNIDLGNDVQALQRLTEAAEKAKVELSTVEKTTIHLPFITADKTGPKHIEQELTRDVFENLCQALINRCRIPVEKSLNDARLDKADINEIVLVGGSTRIPAVQNLVESLTGKKPNQSVNPDEVVAIGAAIQAGILAGEIKDILLLDVTPLSLGVETLGGVMTKIIARNTTIPVKKSEMFSTAVDNQTNVEIHILQGERELVAGNKSLGNFRLDGIPAADRGAPQIEVTFDIDVDGILSVKAREKETGVEQAVTIQGASNLNEKEVEEMLVEAEKFASADKVKRENIDVKNQAEALCFEAEKEVSSFNDTVPENKKQNIKTLIENIRQAVQTDNFETLKEQMEELKTAMKDIVALKSTNDTATDPMSNLNDL</sequence>
<evidence type="ECO:0000255" key="1">
    <source>
        <dbReference type="HAMAP-Rule" id="MF_00332"/>
    </source>
</evidence>
<reference key="1">
    <citation type="journal article" date="2007" name="Mol. Genet. Genomics">
        <title>Chloroplast genomes of the diatoms Phaeodactylum tricornutum and Thalassiosira pseudonana: comparison with other plastid genomes of the red lineage.</title>
        <authorList>
            <person name="Oudot-Le Secq M.-P."/>
            <person name="Grimwood J."/>
            <person name="Shapiro H."/>
            <person name="Armbrust E.V."/>
            <person name="Bowler C."/>
            <person name="Green B.R."/>
        </authorList>
    </citation>
    <scope>NUCLEOTIDE SEQUENCE [LARGE SCALE GENOMIC DNA]</scope>
    <source>
        <strain>CCAP 1055/1</strain>
    </source>
</reference>
<organism>
    <name type="scientific">Phaeodactylum tricornutum (strain CCAP 1055/1)</name>
    <dbReference type="NCBI Taxonomy" id="556484"/>
    <lineage>
        <taxon>Eukaryota</taxon>
        <taxon>Sar</taxon>
        <taxon>Stramenopiles</taxon>
        <taxon>Ochrophyta</taxon>
        <taxon>Bacillariophyta</taxon>
        <taxon>Bacillariophyceae</taxon>
        <taxon>Bacillariophycidae</taxon>
        <taxon>Naviculales</taxon>
        <taxon>Phaeodactylaceae</taxon>
        <taxon>Phaeodactylum</taxon>
    </lineage>
</organism>
<accession>A0T0H7</accession>
<proteinExistence type="inferred from homology"/>
<name>DNAK_PHATC</name>